<proteinExistence type="inferred from homology"/>
<gene>
    <name evidence="1" type="primary">pckA</name>
    <name type="ordered locus">Clos_0884</name>
</gene>
<accession>A8MEV2</accession>
<dbReference type="EC" id="4.1.1.49" evidence="1"/>
<dbReference type="EMBL" id="CP000853">
    <property type="protein sequence ID" value="ABW18431.1"/>
    <property type="molecule type" value="Genomic_DNA"/>
</dbReference>
<dbReference type="RefSeq" id="WP_012158743.1">
    <property type="nucleotide sequence ID" value="NC_009922.1"/>
</dbReference>
<dbReference type="SMR" id="A8MEV2"/>
<dbReference type="STRING" id="350688.Clos_0884"/>
<dbReference type="KEGG" id="aoe:Clos_0884"/>
<dbReference type="eggNOG" id="COG1866">
    <property type="taxonomic scope" value="Bacteria"/>
</dbReference>
<dbReference type="HOGENOM" id="CLU_018247_0_1_9"/>
<dbReference type="OrthoDB" id="9806325at2"/>
<dbReference type="UniPathway" id="UPA00138"/>
<dbReference type="Proteomes" id="UP000000269">
    <property type="component" value="Chromosome"/>
</dbReference>
<dbReference type="GO" id="GO:0005829">
    <property type="term" value="C:cytosol"/>
    <property type="evidence" value="ECO:0007669"/>
    <property type="project" value="TreeGrafter"/>
</dbReference>
<dbReference type="GO" id="GO:0005524">
    <property type="term" value="F:ATP binding"/>
    <property type="evidence" value="ECO:0007669"/>
    <property type="project" value="UniProtKB-UniRule"/>
</dbReference>
<dbReference type="GO" id="GO:0046872">
    <property type="term" value="F:metal ion binding"/>
    <property type="evidence" value="ECO:0007669"/>
    <property type="project" value="UniProtKB-KW"/>
</dbReference>
<dbReference type="GO" id="GO:0004612">
    <property type="term" value="F:phosphoenolpyruvate carboxykinase (ATP) activity"/>
    <property type="evidence" value="ECO:0007669"/>
    <property type="project" value="UniProtKB-UniRule"/>
</dbReference>
<dbReference type="GO" id="GO:0006094">
    <property type="term" value="P:gluconeogenesis"/>
    <property type="evidence" value="ECO:0007669"/>
    <property type="project" value="UniProtKB-UniRule"/>
</dbReference>
<dbReference type="CDD" id="cd00484">
    <property type="entry name" value="PEPCK_ATP"/>
    <property type="match status" value="1"/>
</dbReference>
<dbReference type="FunFam" id="2.170.8.10:FF:000001">
    <property type="entry name" value="Phosphoenolpyruvate carboxykinase (ATP)"/>
    <property type="match status" value="1"/>
</dbReference>
<dbReference type="Gene3D" id="3.90.228.20">
    <property type="match status" value="1"/>
</dbReference>
<dbReference type="Gene3D" id="3.40.449.10">
    <property type="entry name" value="Phosphoenolpyruvate Carboxykinase, domain 1"/>
    <property type="match status" value="1"/>
</dbReference>
<dbReference type="Gene3D" id="2.170.8.10">
    <property type="entry name" value="Phosphoenolpyruvate Carboxykinase, domain 2"/>
    <property type="match status" value="1"/>
</dbReference>
<dbReference type="HAMAP" id="MF_00453">
    <property type="entry name" value="PEPCK_ATP"/>
    <property type="match status" value="1"/>
</dbReference>
<dbReference type="InterPro" id="IPR001272">
    <property type="entry name" value="PEP_carboxykinase_ATP"/>
</dbReference>
<dbReference type="InterPro" id="IPR013035">
    <property type="entry name" value="PEP_carboxykinase_C"/>
</dbReference>
<dbReference type="InterPro" id="IPR008210">
    <property type="entry name" value="PEP_carboxykinase_N"/>
</dbReference>
<dbReference type="InterPro" id="IPR015994">
    <property type="entry name" value="PEPCK_ATP_CS"/>
</dbReference>
<dbReference type="NCBIfam" id="TIGR00224">
    <property type="entry name" value="pckA"/>
    <property type="match status" value="1"/>
</dbReference>
<dbReference type="NCBIfam" id="NF006820">
    <property type="entry name" value="PRK09344.1-2"/>
    <property type="match status" value="1"/>
</dbReference>
<dbReference type="NCBIfam" id="NF006821">
    <property type="entry name" value="PRK09344.1-3"/>
    <property type="match status" value="1"/>
</dbReference>
<dbReference type="PANTHER" id="PTHR30031:SF0">
    <property type="entry name" value="PHOSPHOENOLPYRUVATE CARBOXYKINASE (ATP)"/>
    <property type="match status" value="1"/>
</dbReference>
<dbReference type="PANTHER" id="PTHR30031">
    <property type="entry name" value="PHOSPHOENOLPYRUVATE CARBOXYKINASE ATP"/>
    <property type="match status" value="1"/>
</dbReference>
<dbReference type="Pfam" id="PF01293">
    <property type="entry name" value="PEPCK_ATP"/>
    <property type="match status" value="1"/>
</dbReference>
<dbReference type="PIRSF" id="PIRSF006294">
    <property type="entry name" value="PEP_crbxkin"/>
    <property type="match status" value="1"/>
</dbReference>
<dbReference type="SUPFAM" id="SSF68923">
    <property type="entry name" value="PEP carboxykinase N-terminal domain"/>
    <property type="match status" value="1"/>
</dbReference>
<dbReference type="SUPFAM" id="SSF53795">
    <property type="entry name" value="PEP carboxykinase-like"/>
    <property type="match status" value="1"/>
</dbReference>
<dbReference type="PROSITE" id="PS00532">
    <property type="entry name" value="PEPCK_ATP"/>
    <property type="match status" value="1"/>
</dbReference>
<comment type="function">
    <text evidence="1">Involved in the gluconeogenesis. Catalyzes the conversion of oxaloacetate (OAA) to phosphoenolpyruvate (PEP) through direct phosphoryl transfer between the nucleoside triphosphate and OAA.</text>
</comment>
<comment type="catalytic activity">
    <reaction evidence="1">
        <text>oxaloacetate + ATP = phosphoenolpyruvate + ADP + CO2</text>
        <dbReference type="Rhea" id="RHEA:18617"/>
        <dbReference type="ChEBI" id="CHEBI:16452"/>
        <dbReference type="ChEBI" id="CHEBI:16526"/>
        <dbReference type="ChEBI" id="CHEBI:30616"/>
        <dbReference type="ChEBI" id="CHEBI:58702"/>
        <dbReference type="ChEBI" id="CHEBI:456216"/>
        <dbReference type="EC" id="4.1.1.49"/>
    </reaction>
</comment>
<comment type="cofactor">
    <cofactor evidence="1">
        <name>Mn(2+)</name>
        <dbReference type="ChEBI" id="CHEBI:29035"/>
    </cofactor>
    <text evidence="1">Binds 1 Mn(2+) ion per subunit.</text>
</comment>
<comment type="pathway">
    <text evidence="1">Carbohydrate biosynthesis; gluconeogenesis.</text>
</comment>
<comment type="subcellular location">
    <subcellularLocation>
        <location evidence="1">Cytoplasm</location>
    </subcellularLocation>
</comment>
<comment type="similarity">
    <text evidence="1">Belongs to the phosphoenolpyruvate carboxykinase (ATP) family.</text>
</comment>
<protein>
    <recommendedName>
        <fullName evidence="1">Phosphoenolpyruvate carboxykinase (ATP)</fullName>
        <shortName evidence="1">PCK</shortName>
        <shortName evidence="1">PEP carboxykinase</shortName>
        <shortName evidence="1">PEPCK</shortName>
        <ecNumber evidence="1">4.1.1.49</ecNumber>
    </recommendedName>
</protein>
<organism>
    <name type="scientific">Alkaliphilus oremlandii (strain OhILAs)</name>
    <name type="common">Clostridium oremlandii (strain OhILAs)</name>
    <dbReference type="NCBI Taxonomy" id="350688"/>
    <lineage>
        <taxon>Bacteria</taxon>
        <taxon>Bacillati</taxon>
        <taxon>Bacillota</taxon>
        <taxon>Clostridia</taxon>
        <taxon>Peptostreptococcales</taxon>
        <taxon>Natronincolaceae</taxon>
        <taxon>Alkaliphilus</taxon>
    </lineage>
</organism>
<feature type="chain" id="PRO_1000072372" description="Phosphoenolpyruvate carboxykinase (ATP)">
    <location>
        <begin position="1"/>
        <end position="526"/>
    </location>
</feature>
<feature type="binding site" evidence="1">
    <location>
        <position position="55"/>
    </location>
    <ligand>
        <name>substrate</name>
    </ligand>
</feature>
<feature type="binding site" evidence="1">
    <location>
        <position position="190"/>
    </location>
    <ligand>
        <name>substrate</name>
    </ligand>
</feature>
<feature type="binding site" evidence="1">
    <location>
        <position position="196"/>
    </location>
    <ligand>
        <name>ATP</name>
        <dbReference type="ChEBI" id="CHEBI:30616"/>
    </ligand>
</feature>
<feature type="binding site" evidence="1">
    <location>
        <position position="196"/>
    </location>
    <ligand>
        <name>Mn(2+)</name>
        <dbReference type="ChEBI" id="CHEBI:29035"/>
    </ligand>
</feature>
<feature type="binding site" evidence="1">
    <location>
        <position position="196"/>
    </location>
    <ligand>
        <name>substrate</name>
    </ligand>
</feature>
<feature type="binding site" evidence="1">
    <location>
        <position position="215"/>
    </location>
    <ligand>
        <name>ATP</name>
        <dbReference type="ChEBI" id="CHEBI:30616"/>
    </ligand>
</feature>
<feature type="binding site" evidence="1">
    <location>
        <position position="215"/>
    </location>
    <ligand>
        <name>Mn(2+)</name>
        <dbReference type="ChEBI" id="CHEBI:29035"/>
    </ligand>
</feature>
<feature type="binding site" evidence="1">
    <location>
        <begin position="231"/>
        <end position="239"/>
    </location>
    <ligand>
        <name>ATP</name>
        <dbReference type="ChEBI" id="CHEBI:30616"/>
    </ligand>
</feature>
<feature type="binding site" evidence="1">
    <location>
        <position position="252"/>
    </location>
    <ligand>
        <name>Mn(2+)</name>
        <dbReference type="ChEBI" id="CHEBI:29035"/>
    </ligand>
</feature>
<feature type="binding site" evidence="1">
    <location>
        <position position="280"/>
    </location>
    <ligand>
        <name>ATP</name>
        <dbReference type="ChEBI" id="CHEBI:30616"/>
    </ligand>
</feature>
<feature type="binding site" evidence="1">
    <location>
        <position position="317"/>
    </location>
    <ligand>
        <name>ATP</name>
        <dbReference type="ChEBI" id="CHEBI:30616"/>
    </ligand>
</feature>
<feature type="binding site" evidence="1">
    <location>
        <position position="317"/>
    </location>
    <ligand>
        <name>substrate</name>
    </ligand>
</feature>
<feature type="binding site" evidence="1">
    <location>
        <position position="442"/>
    </location>
    <ligand>
        <name>ATP</name>
        <dbReference type="ChEBI" id="CHEBI:30616"/>
    </ligand>
</feature>
<keyword id="KW-0067">ATP-binding</keyword>
<keyword id="KW-0963">Cytoplasm</keyword>
<keyword id="KW-0210">Decarboxylase</keyword>
<keyword id="KW-0312">Gluconeogenesis</keyword>
<keyword id="KW-0456">Lyase</keyword>
<keyword id="KW-0464">Manganese</keyword>
<keyword id="KW-0479">Metal-binding</keyword>
<keyword id="KW-0547">Nucleotide-binding</keyword>
<keyword id="KW-1185">Reference proteome</keyword>
<name>PCKA_ALKOO</name>
<sequence length="526" mass="58663">MNNVKELIDSGILKTNKIHYNLPVEELIKIAVEKEGGVIAKNGALCINTGKYTGRSPEDRFIVDEPSVHDHINWNKGNKGISAQVFDNLFNKAMAHVKDKELFVFEGFVGSDLDYRMPIRVINEFAYQNLFASQMFIKPKAGERENFDPEFTVLALPDLKADPAVDGTNSEVFIILNFAQKIVLIGGTRYSGEIKKSIFTVMNYLLPFKDVLPMHCSANIGEDGNVALFFGLSGTGKTTLSADNNRKLIGDDEHGWTANGVFNFEGGCYAKCINLTEEQEPQIWNAIKHGAILENIVIDENTGHIDYDDDRYTENTRAAYPVEYIDDAVLEGKGGIPNTIIFLTADATGVLPPIAKLTKEQAMYHFMSGYTSKLAGTERGIVEPTATFSTCFGGPFMLLKPQTYAKLLGEKIEKYNTRVFLVNTGWTGGPYGIGSRMKLKYTRSMVRAAIKGELDQVEYIKDPIFNLSIPTTCPEVPVEVLEPSKTWDNQDEYDQKANELAKSFVENFKKFDDVSDDIKNVNPKVQ</sequence>
<reference key="1">
    <citation type="submission" date="2007-10" db="EMBL/GenBank/DDBJ databases">
        <title>Complete genome of Alkaliphilus oremlandii OhILAs.</title>
        <authorList>
            <person name="Copeland A."/>
            <person name="Lucas S."/>
            <person name="Lapidus A."/>
            <person name="Barry K."/>
            <person name="Detter J.C."/>
            <person name="Glavina del Rio T."/>
            <person name="Hammon N."/>
            <person name="Israni S."/>
            <person name="Dalin E."/>
            <person name="Tice H."/>
            <person name="Pitluck S."/>
            <person name="Chain P."/>
            <person name="Malfatti S."/>
            <person name="Shin M."/>
            <person name="Vergez L."/>
            <person name="Schmutz J."/>
            <person name="Larimer F."/>
            <person name="Land M."/>
            <person name="Hauser L."/>
            <person name="Kyrpides N."/>
            <person name="Mikhailova N."/>
            <person name="Stolz J.F."/>
            <person name="Dawson A."/>
            <person name="Fisher E."/>
            <person name="Crable B."/>
            <person name="Perera E."/>
            <person name="Lisak J."/>
            <person name="Ranganathan M."/>
            <person name="Basu P."/>
            <person name="Richardson P."/>
        </authorList>
    </citation>
    <scope>NUCLEOTIDE SEQUENCE [LARGE SCALE GENOMIC DNA]</scope>
    <source>
        <strain>OhILAs</strain>
    </source>
</reference>
<evidence type="ECO:0000255" key="1">
    <source>
        <dbReference type="HAMAP-Rule" id="MF_00453"/>
    </source>
</evidence>